<proteinExistence type="evidence at protein level"/>
<feature type="chain" id="PRO_0000441626" description="Paraneoplastic antigen-like protein 8C">
    <location>
        <begin position="1"/>
        <end position="204"/>
    </location>
</feature>
<feature type="region of interest" description="Disordered" evidence="1">
    <location>
        <begin position="135"/>
        <end position="204"/>
    </location>
</feature>
<feature type="compositionally biased region" description="Basic residues" evidence="1">
    <location>
        <begin position="182"/>
        <end position="204"/>
    </location>
</feature>
<keyword id="KW-1267">Proteomics identification</keyword>
<keyword id="KW-1185">Reference proteome</keyword>
<comment type="similarity">
    <text evidence="2">Belongs to the PNMA family.</text>
</comment>
<protein>
    <recommendedName>
        <fullName evidence="2">Paraneoplastic antigen-like protein 8C</fullName>
    </recommendedName>
</protein>
<gene>
    <name evidence="3" type="primary">PNMA8C</name>
</gene>
<dbReference type="EMBL" id="AC024584">
    <property type="status" value="NOT_ANNOTATED_CDS"/>
    <property type="molecule type" value="Genomic_DNA"/>
</dbReference>
<dbReference type="CCDS" id="CCDS92649.1"/>
<dbReference type="RefSeq" id="NP_001373722.1">
    <property type="nucleotide sequence ID" value="NM_001386793.1"/>
</dbReference>
<dbReference type="STRING" id="9606.ENSP00000490139"/>
<dbReference type="BioMuta" id="PNMA8C"/>
<dbReference type="MassIVE" id="A0A1B0GUJ8"/>
<dbReference type="PeptideAtlas" id="A0A1B0GUJ8"/>
<dbReference type="Ensembl" id="ENST00000617053.3">
    <property type="protein sequence ID" value="ENSP00000490139.1"/>
    <property type="gene ID" value="ENSG00000277531.3"/>
</dbReference>
<dbReference type="GeneID" id="110806277"/>
<dbReference type="MANE-Select" id="ENST00000617053.3">
    <property type="protein sequence ID" value="ENSP00000490139.1"/>
    <property type="RefSeq nucleotide sequence ID" value="NM_001386793.1"/>
    <property type="RefSeq protein sequence ID" value="NP_001373722.1"/>
</dbReference>
<dbReference type="AGR" id="HGNC:53427"/>
<dbReference type="GeneCards" id="PNMA8C"/>
<dbReference type="HGNC" id="HGNC:53427">
    <property type="gene designation" value="PNMA8C"/>
</dbReference>
<dbReference type="HPA" id="ENSG00000277531">
    <property type="expression patterns" value="Group enriched (brain, pituitary gland)"/>
</dbReference>
<dbReference type="MIM" id="620934">
    <property type="type" value="gene"/>
</dbReference>
<dbReference type="neXtProt" id="NX_A0A1B0GUJ8"/>
<dbReference type="VEuPathDB" id="HostDB:ENSG00000277531"/>
<dbReference type="GeneTree" id="ENSGT01030000234522"/>
<dbReference type="InParanoid" id="A0A1B0GUJ8"/>
<dbReference type="OMA" id="RQELCPT"/>
<dbReference type="OrthoDB" id="115435at2759"/>
<dbReference type="PAN-GO" id="A0A1B0GUJ8">
    <property type="GO annotations" value="0 GO annotations based on evolutionary models"/>
</dbReference>
<dbReference type="Pharos" id="A0A1B0GUJ8">
    <property type="development level" value="Tdark"/>
</dbReference>
<dbReference type="PRO" id="PR:A0A1B0GUJ8"/>
<dbReference type="Proteomes" id="UP000005640">
    <property type="component" value="Chromosome 19"/>
</dbReference>
<dbReference type="RNAct" id="A0A1B0GUJ8">
    <property type="molecule type" value="protein"/>
</dbReference>
<dbReference type="Bgee" id="ENSG00000277531">
    <property type="expression patterns" value="Expressed in cerebellar vermis and 74 other cell types or tissues"/>
</dbReference>
<dbReference type="InterPro" id="IPR026523">
    <property type="entry name" value="PNMA"/>
</dbReference>
<dbReference type="InterPro" id="IPR048271">
    <property type="entry name" value="PNMA_N"/>
</dbReference>
<dbReference type="PANTHER" id="PTHR23095">
    <property type="entry name" value="PARANEOPLASTIC ANTIGEN"/>
    <property type="match status" value="1"/>
</dbReference>
<dbReference type="PANTHER" id="PTHR23095:SF43">
    <property type="entry name" value="PARANEOPLASTIC ANTIGEN-LIKE PROTEIN 8C"/>
    <property type="match status" value="1"/>
</dbReference>
<dbReference type="Pfam" id="PF20846">
    <property type="entry name" value="PNMA_N"/>
    <property type="match status" value="1"/>
</dbReference>
<sequence>MLFGVKDIALLEHGCKALEVDSYKSLMILGIPEDCNHEEFEEIIRLPLKPLGKFEVAGKAYLEEDKSKAAIIQLTEDINYAVVPREIKGKGGVWRVVYMPRKQDIEFLTKLNLFLQSEGRTVEDMARVLRQELCPPATGPRELPARKCSVPGLGEKPEAGATVQMDVVPPLDSSEKESKAGVGKRGKRKNKKNRRRHHASDKKL</sequence>
<name>PNM8C_HUMAN</name>
<organism>
    <name type="scientific">Homo sapiens</name>
    <name type="common">Human</name>
    <dbReference type="NCBI Taxonomy" id="9606"/>
    <lineage>
        <taxon>Eukaryota</taxon>
        <taxon>Metazoa</taxon>
        <taxon>Chordata</taxon>
        <taxon>Craniata</taxon>
        <taxon>Vertebrata</taxon>
        <taxon>Euteleostomi</taxon>
        <taxon>Mammalia</taxon>
        <taxon>Eutheria</taxon>
        <taxon>Euarchontoglires</taxon>
        <taxon>Primates</taxon>
        <taxon>Haplorrhini</taxon>
        <taxon>Catarrhini</taxon>
        <taxon>Hominidae</taxon>
        <taxon>Homo</taxon>
    </lineage>
</organism>
<accession>A0A1B0GUJ8</accession>
<reference key="1">
    <citation type="journal article" date="2004" name="Nature">
        <title>The DNA sequence and biology of human chromosome 19.</title>
        <authorList>
            <person name="Grimwood J."/>
            <person name="Gordon L.A."/>
            <person name="Olsen A.S."/>
            <person name="Terry A."/>
            <person name="Schmutz J."/>
            <person name="Lamerdin J.E."/>
            <person name="Hellsten U."/>
            <person name="Goodstein D."/>
            <person name="Couronne O."/>
            <person name="Tran-Gyamfi M."/>
            <person name="Aerts A."/>
            <person name="Altherr M."/>
            <person name="Ashworth L."/>
            <person name="Bajorek E."/>
            <person name="Black S."/>
            <person name="Branscomb E."/>
            <person name="Caenepeel S."/>
            <person name="Carrano A.V."/>
            <person name="Caoile C."/>
            <person name="Chan Y.M."/>
            <person name="Christensen M."/>
            <person name="Cleland C.A."/>
            <person name="Copeland A."/>
            <person name="Dalin E."/>
            <person name="Dehal P."/>
            <person name="Denys M."/>
            <person name="Detter J.C."/>
            <person name="Escobar J."/>
            <person name="Flowers D."/>
            <person name="Fotopulos D."/>
            <person name="Garcia C."/>
            <person name="Georgescu A.M."/>
            <person name="Glavina T."/>
            <person name="Gomez M."/>
            <person name="Gonzales E."/>
            <person name="Groza M."/>
            <person name="Hammon N."/>
            <person name="Hawkins T."/>
            <person name="Haydu L."/>
            <person name="Ho I."/>
            <person name="Huang W."/>
            <person name="Israni S."/>
            <person name="Jett J."/>
            <person name="Kadner K."/>
            <person name="Kimball H."/>
            <person name="Kobayashi A."/>
            <person name="Larionov V."/>
            <person name="Leem S.-H."/>
            <person name="Lopez F."/>
            <person name="Lou Y."/>
            <person name="Lowry S."/>
            <person name="Malfatti S."/>
            <person name="Martinez D."/>
            <person name="McCready P.M."/>
            <person name="Medina C."/>
            <person name="Morgan J."/>
            <person name="Nelson K."/>
            <person name="Nolan M."/>
            <person name="Ovcharenko I."/>
            <person name="Pitluck S."/>
            <person name="Pollard M."/>
            <person name="Popkie A.P."/>
            <person name="Predki P."/>
            <person name="Quan G."/>
            <person name="Ramirez L."/>
            <person name="Rash S."/>
            <person name="Retterer J."/>
            <person name="Rodriguez A."/>
            <person name="Rogers S."/>
            <person name="Salamov A."/>
            <person name="Salazar A."/>
            <person name="She X."/>
            <person name="Smith D."/>
            <person name="Slezak T."/>
            <person name="Solovyev V."/>
            <person name="Thayer N."/>
            <person name="Tice H."/>
            <person name="Tsai M."/>
            <person name="Ustaszewska A."/>
            <person name="Vo N."/>
            <person name="Wagner M."/>
            <person name="Wheeler J."/>
            <person name="Wu K."/>
            <person name="Xie G."/>
            <person name="Yang J."/>
            <person name="Dubchak I."/>
            <person name="Furey T.S."/>
            <person name="DeJong P."/>
            <person name="Dickson M."/>
            <person name="Gordon D."/>
            <person name="Eichler E.E."/>
            <person name="Pennacchio L.A."/>
            <person name="Richardson P."/>
            <person name="Stubbs L."/>
            <person name="Rokhsar D.S."/>
            <person name="Myers R.M."/>
            <person name="Rubin E.M."/>
            <person name="Lucas S.M."/>
        </authorList>
    </citation>
    <scope>NUCLEOTIDE SEQUENCE [LARGE SCALE GENOMIC DNA]</scope>
</reference>
<evidence type="ECO:0000256" key="1">
    <source>
        <dbReference type="SAM" id="MobiDB-lite"/>
    </source>
</evidence>
<evidence type="ECO:0000305" key="2"/>
<evidence type="ECO:0000312" key="3">
    <source>
        <dbReference type="HGNC" id="HGNC:53427"/>
    </source>
</evidence>